<organism>
    <name type="scientific">Buchnera aphidicola subsp. Schizaphis graminum (strain Sg)</name>
    <dbReference type="NCBI Taxonomy" id="198804"/>
    <lineage>
        <taxon>Bacteria</taxon>
        <taxon>Pseudomonadati</taxon>
        <taxon>Pseudomonadota</taxon>
        <taxon>Gammaproteobacteria</taxon>
        <taxon>Enterobacterales</taxon>
        <taxon>Erwiniaceae</taxon>
        <taxon>Buchnera</taxon>
    </lineage>
</organism>
<accession>Q8K904</accession>
<sequence>MNIYLIINHENQRIQNLIDKYHLKHDENSSMALIMNSNSLELYDRSKPRNKSIKVNFSSKKNNYRCLNFKKKNEILYKAIGIKKNYFPSVLDATAGLGQDSFLISFLGCYVIMMEYHPVIAALLTDGLERGYKDEKIGFWLKKRLHLIYDNSLNILNIPISQPDVIYLDPMYPINKKKSLPKKNMQFLRKLANKDDQSKNLLKVARKFAKKRVVVKRPSYANPISDEKVDFIISNKYHRFDIYLPFKKK</sequence>
<evidence type="ECO:0000255" key="1">
    <source>
        <dbReference type="HAMAP-Rule" id="MF_01523"/>
    </source>
</evidence>
<comment type="function">
    <text evidence="1">Specifically methylates the guanosine in position 1516 of 16S rRNA.</text>
</comment>
<comment type="catalytic activity">
    <reaction evidence="1">
        <text>guanosine(1516) in 16S rRNA + S-adenosyl-L-methionine = N(2)-methylguanosine(1516) in 16S rRNA + S-adenosyl-L-homocysteine + H(+)</text>
        <dbReference type="Rhea" id="RHEA:43220"/>
        <dbReference type="Rhea" id="RHEA-COMP:10412"/>
        <dbReference type="Rhea" id="RHEA-COMP:10413"/>
        <dbReference type="ChEBI" id="CHEBI:15378"/>
        <dbReference type="ChEBI" id="CHEBI:57856"/>
        <dbReference type="ChEBI" id="CHEBI:59789"/>
        <dbReference type="ChEBI" id="CHEBI:74269"/>
        <dbReference type="ChEBI" id="CHEBI:74481"/>
        <dbReference type="EC" id="2.1.1.242"/>
    </reaction>
</comment>
<comment type="subcellular location">
    <subcellularLocation>
        <location evidence="1">Cytoplasm</location>
    </subcellularLocation>
</comment>
<comment type="similarity">
    <text evidence="1">Belongs to the methyltransferase superfamily. RsmJ family.</text>
</comment>
<dbReference type="EC" id="2.1.1.242" evidence="1"/>
<dbReference type="EMBL" id="AE013218">
    <property type="protein sequence ID" value="AAM68101.1"/>
    <property type="molecule type" value="Genomic_DNA"/>
</dbReference>
<dbReference type="RefSeq" id="WP_011054067.1">
    <property type="nucleotide sequence ID" value="NC_004061.1"/>
</dbReference>
<dbReference type="SMR" id="Q8K904"/>
<dbReference type="STRING" id="198804.BUsg_565"/>
<dbReference type="GeneID" id="93004043"/>
<dbReference type="KEGG" id="bas:BUsg_565"/>
<dbReference type="eggNOG" id="COG0742">
    <property type="taxonomic scope" value="Bacteria"/>
</dbReference>
<dbReference type="HOGENOM" id="CLU_076324_0_0_6"/>
<dbReference type="Proteomes" id="UP000000416">
    <property type="component" value="Chromosome"/>
</dbReference>
<dbReference type="GO" id="GO:0005737">
    <property type="term" value="C:cytoplasm"/>
    <property type="evidence" value="ECO:0007669"/>
    <property type="project" value="UniProtKB-SubCell"/>
</dbReference>
<dbReference type="GO" id="GO:0008990">
    <property type="term" value="F:rRNA (guanine-N2-)-methyltransferase activity"/>
    <property type="evidence" value="ECO:0007669"/>
    <property type="project" value="UniProtKB-UniRule"/>
</dbReference>
<dbReference type="CDD" id="cd02440">
    <property type="entry name" value="AdoMet_MTases"/>
    <property type="match status" value="1"/>
</dbReference>
<dbReference type="Gene3D" id="3.40.50.150">
    <property type="entry name" value="Vaccinia Virus protein VP39"/>
    <property type="match status" value="1"/>
</dbReference>
<dbReference type="Gene3D" id="3.40.1630.10">
    <property type="entry name" value="YhiQ-like domain"/>
    <property type="match status" value="1"/>
</dbReference>
<dbReference type="HAMAP" id="MF_01523">
    <property type="entry name" value="16SrRNA_methyltr_J"/>
    <property type="match status" value="1"/>
</dbReference>
<dbReference type="InterPro" id="IPR007536">
    <property type="entry name" value="16SrRNA_methylTrfase_J"/>
</dbReference>
<dbReference type="InterPro" id="IPR029063">
    <property type="entry name" value="SAM-dependent_MTases_sf"/>
</dbReference>
<dbReference type="PANTHER" id="PTHR36112">
    <property type="entry name" value="RIBOSOMAL RNA SMALL SUBUNIT METHYLTRANSFERASE J"/>
    <property type="match status" value="1"/>
</dbReference>
<dbReference type="PANTHER" id="PTHR36112:SF1">
    <property type="entry name" value="RIBOSOMAL RNA SMALL SUBUNIT METHYLTRANSFERASE J"/>
    <property type="match status" value="1"/>
</dbReference>
<dbReference type="Pfam" id="PF04445">
    <property type="entry name" value="SAM_MT"/>
    <property type="match status" value="1"/>
</dbReference>
<dbReference type="SUPFAM" id="SSF53335">
    <property type="entry name" value="S-adenosyl-L-methionine-dependent methyltransferases"/>
    <property type="match status" value="1"/>
</dbReference>
<feature type="chain" id="PRO_0000212060" description="Ribosomal RNA small subunit methyltransferase J">
    <location>
        <begin position="1"/>
        <end position="249"/>
    </location>
</feature>
<feature type="binding site" evidence="1">
    <location>
        <position position="169"/>
    </location>
    <ligand>
        <name>S-adenosyl-L-methionine</name>
        <dbReference type="ChEBI" id="CHEBI:59789"/>
    </ligand>
</feature>
<keyword id="KW-0963">Cytoplasm</keyword>
<keyword id="KW-0489">Methyltransferase</keyword>
<keyword id="KW-0698">rRNA processing</keyword>
<keyword id="KW-0949">S-adenosyl-L-methionine</keyword>
<keyword id="KW-0808">Transferase</keyword>
<protein>
    <recommendedName>
        <fullName evidence="1">Ribosomal RNA small subunit methyltransferase J</fullName>
        <ecNumber evidence="1">2.1.1.242</ecNumber>
    </recommendedName>
    <alternativeName>
        <fullName evidence="1">16S rRNA m2G1516 methyltransferase</fullName>
    </alternativeName>
    <alternativeName>
        <fullName evidence="1">rRNA (guanine-N(2)-)-methyltransferase</fullName>
    </alternativeName>
</protein>
<name>RSMJ_BUCAP</name>
<proteinExistence type="inferred from homology"/>
<gene>
    <name evidence="1" type="primary">rsmJ</name>
    <name type="ordered locus">BUsg_565</name>
</gene>
<reference key="1">
    <citation type="journal article" date="2002" name="Science">
        <title>50 million years of genomic stasis in endosymbiotic bacteria.</title>
        <authorList>
            <person name="Tamas I."/>
            <person name="Klasson L."/>
            <person name="Canbaeck B."/>
            <person name="Naeslund A.K."/>
            <person name="Eriksson A.-S."/>
            <person name="Wernegreen J.J."/>
            <person name="Sandstroem J.P."/>
            <person name="Moran N.A."/>
            <person name="Andersson S.G.E."/>
        </authorList>
    </citation>
    <scope>NUCLEOTIDE SEQUENCE [LARGE SCALE GENOMIC DNA]</scope>
    <source>
        <strain>Sg</strain>
    </source>
</reference>